<protein>
    <recommendedName>
        <fullName>Streptothricin hydrolase</fullName>
        <ecNumber>3.5.2.19</ecNumber>
    </recommendedName>
</protein>
<proteinExistence type="evidence at protein level"/>
<organism>
    <name type="scientific">Streptomyces noursei</name>
    <name type="common">Streptomyces albulus</name>
    <dbReference type="NCBI Taxonomy" id="1971"/>
    <lineage>
        <taxon>Bacteria</taxon>
        <taxon>Bacillati</taxon>
        <taxon>Actinomycetota</taxon>
        <taxon>Actinomycetes</taxon>
        <taxon>Kitasatosporales</taxon>
        <taxon>Streptomycetaceae</taxon>
        <taxon>Streptomyces</taxon>
    </lineage>
</organism>
<sequence>MIRPDRCPWQPCPSGRYLSRPSGRVPRSTMMTPMTAMPAVTAMPPETAAPPETAAPARPLRPVQALLVVDVQTAFVSGAEAVPEAARVLDRTRGLLARARTAGALVVHLQNDGAPGAVDAPHTPGWELHLPVEPGPREHVVRKTEDDGFADTGLGALLDAAGVTELAVCGVLSEMCVAATARTALELGHRVVLPHDAHATYDIPAAPDISDTVPAAMSSRAAEWALGDEVEIVPRAAAVPFVAPPLAPAPEAPAAAAAPAAGTGLSPAGPPPAPAR</sequence>
<accession>Q1MW86</accession>
<dbReference type="EC" id="3.5.2.19"/>
<dbReference type="EMBL" id="AB248874">
    <property type="protein sequence ID" value="BAE93577.1"/>
    <property type="status" value="ALT_INIT"/>
    <property type="molecule type" value="Genomic_DNA"/>
</dbReference>
<dbReference type="RefSeq" id="WP_045788537.1">
    <property type="nucleotide sequence ID" value="NZ_JBHXWM010000020.1"/>
</dbReference>
<dbReference type="SMR" id="Q1MW86"/>
<dbReference type="KEGG" id="ag:BAE93577"/>
<dbReference type="BioCyc" id="MetaCyc:MONOMER-15931"/>
<dbReference type="BRENDA" id="3.5.2.19">
    <property type="organism ID" value="7858"/>
</dbReference>
<dbReference type="GO" id="GO:0016812">
    <property type="term" value="F:hydrolase activity, acting on carbon-nitrogen (but not peptide) bonds, in cyclic amides"/>
    <property type="evidence" value="ECO:0000314"/>
    <property type="project" value="UniProtKB"/>
</dbReference>
<dbReference type="GO" id="GO:0046677">
    <property type="term" value="P:response to antibiotic"/>
    <property type="evidence" value="ECO:0007669"/>
    <property type="project" value="UniProtKB-KW"/>
</dbReference>
<dbReference type="CDD" id="cd01014">
    <property type="entry name" value="nicotinamidase_related"/>
    <property type="match status" value="1"/>
</dbReference>
<dbReference type="FunFam" id="3.40.50.850:FF:000018">
    <property type="entry name" value="Streptothricin hydrolase"/>
    <property type="match status" value="1"/>
</dbReference>
<dbReference type="Gene3D" id="3.40.50.850">
    <property type="entry name" value="Isochorismatase-like"/>
    <property type="match status" value="1"/>
</dbReference>
<dbReference type="InterPro" id="IPR000868">
    <property type="entry name" value="Isochorismatase-like_dom"/>
</dbReference>
<dbReference type="InterPro" id="IPR050272">
    <property type="entry name" value="Isochorismatase-like_hydrls"/>
</dbReference>
<dbReference type="InterPro" id="IPR036380">
    <property type="entry name" value="Isochorismatase-like_sf"/>
</dbReference>
<dbReference type="PANTHER" id="PTHR43540:SF1">
    <property type="entry name" value="ISOCHORISMATASE HYDROLASE"/>
    <property type="match status" value="1"/>
</dbReference>
<dbReference type="PANTHER" id="PTHR43540">
    <property type="entry name" value="PEROXYUREIDOACRYLATE/UREIDOACRYLATE AMIDOHYDROLASE-RELATED"/>
    <property type="match status" value="1"/>
</dbReference>
<dbReference type="Pfam" id="PF00857">
    <property type="entry name" value="Isochorismatase"/>
    <property type="match status" value="1"/>
</dbReference>
<dbReference type="SUPFAM" id="SSF52499">
    <property type="entry name" value="Isochorismatase-like hydrolases"/>
    <property type="match status" value="1"/>
</dbReference>
<keyword id="KW-0046">Antibiotic resistance</keyword>
<keyword id="KW-0378">Hydrolase</keyword>
<feature type="chain" id="PRO_0000418975" description="Streptothricin hydrolase">
    <location>
        <begin position="1"/>
        <end position="276"/>
    </location>
</feature>
<feature type="region of interest" description="Disordered" evidence="1">
    <location>
        <begin position="250"/>
        <end position="276"/>
    </location>
</feature>
<feature type="compositionally biased region" description="Low complexity" evidence="1">
    <location>
        <begin position="252"/>
        <end position="267"/>
    </location>
</feature>
<feature type="active site" description="Nucleophile" evidence="4">
    <location>
        <position position="176"/>
    </location>
</feature>
<feature type="mutagenesis site" description="Loss of activity." evidence="3">
    <original>C</original>
    <variation>S</variation>
    <location>
        <position position="176"/>
    </location>
</feature>
<comment type="function">
    <text evidence="2 3">Catalyzes the hydrolysis of the amide bond of streptolidine lactam, thereby conferring streptothricin (ST) resistance. Can hydrolyze streptothricin-F and streptothricin-D. However, this strain is believed to be a ST nonproducer, which raises the possibility that its true role may not be its involvement in self-resistance to STs. May catalyze the hydrolysis of naturally occurring cyclic amide compounds that are structurally related to STs.</text>
</comment>
<comment type="catalytic activity">
    <reaction evidence="2 3">
        <text>streptothricin F + H2O = streptothricin F acid</text>
        <dbReference type="Rhea" id="RHEA:28138"/>
        <dbReference type="ChEBI" id="CHEBI:15377"/>
        <dbReference type="ChEBI" id="CHEBI:60822"/>
        <dbReference type="ChEBI" id="CHEBI:60838"/>
        <dbReference type="EC" id="3.5.2.19"/>
    </reaction>
</comment>
<comment type="cofactor">
    <text evidence="2">Does not require a metal cofactor.</text>
</comment>
<comment type="biophysicochemical properties">
    <kinetics>
        <KM evidence="3">3.1 mM for streptothricin-F</KM>
        <KM evidence="3">17.2 mM for streptothricin-D</KM>
        <Vmax evidence="3">48.3 umol/min/mg enzyme with streptothricin-F as substrate</Vmax>
        <Vmax evidence="3">199.7 umol/min/mg enzyme with streptothricin-D as substrate</Vmax>
    </kinetics>
    <phDependence>
        <text evidence="3">Optimum pH is 6.5.</text>
    </phDependence>
    <temperatureDependence>
        <text evidence="3">Optimum temperature is 45 degrees Celsius.</text>
    </temperatureDependence>
</comment>
<comment type="subunit">
    <text evidence="2">Homodimer.</text>
</comment>
<comment type="similarity">
    <text evidence="4">Belongs to the isochorismatase family.</text>
</comment>
<comment type="sequence caution" evidence="4">
    <conflict type="erroneous initiation">
        <sequence resource="EMBL-CDS" id="BAE93577"/>
    </conflict>
    <text>Truncated N-terminus.</text>
</comment>
<name>STTH1_STRNR</name>
<gene>
    <name type="primary">sttH</name>
</gene>
<reference key="1">
    <citation type="journal article" date="2006" name="J. Biol. Chem.">
        <title>A novel enzyme conferring streptothricin resistance alters the toxicity of streptothricin D from broad-spectrum to bacteria-specific.</title>
        <authorList>
            <person name="Hamano Y."/>
            <person name="Matsuura N."/>
            <person name="Kitamura M."/>
            <person name="Takagi H."/>
        </authorList>
    </citation>
    <scope>NUCLEOTIDE SEQUENCE [GENOMIC DNA]</scope>
    <scope>FUNCTION</scope>
    <scope>CATALYTIC ACTIVITY</scope>
    <scope>COFACTOR</scope>
    <scope>SUBUNIT</scope>
    <source>
        <strain>JCM 5054 / NBRC 14147 / KCC S-1054 / 346</strain>
    </source>
</reference>
<reference key="2">
    <citation type="journal article" date="2009" name="Biosci. Biotechnol. Biochem.">
        <title>The biological function of the bacterial isochorismatase-like hydrolase SttH.</title>
        <authorList>
            <person name="Maruyama C."/>
            <person name="Hamano Y."/>
        </authorList>
    </citation>
    <scope>IDENTIFICATION OF START SITE</scope>
    <scope>FUNCTION</scope>
    <scope>CATALYTIC ACTIVITY</scope>
    <scope>BIOPHYSICOCHEMICAL PROPERTIES</scope>
    <scope>MUTAGENESIS OF CYS-176</scope>
    <source>
        <strain>JCM 5054 / NBRC 14147 / KCC S-1054 / 346</strain>
    </source>
</reference>
<evidence type="ECO:0000256" key="1">
    <source>
        <dbReference type="SAM" id="MobiDB-lite"/>
    </source>
</evidence>
<evidence type="ECO:0000269" key="2">
    <source>
    </source>
</evidence>
<evidence type="ECO:0000269" key="3">
    <source>
    </source>
</evidence>
<evidence type="ECO:0000305" key="4"/>